<evidence type="ECO:0000250" key="1"/>
<evidence type="ECO:0000255" key="2">
    <source>
        <dbReference type="PROSITE-ProRule" id="PRU00159"/>
    </source>
</evidence>
<evidence type="ECO:0000255" key="3">
    <source>
        <dbReference type="PROSITE-ProRule" id="PRU10027"/>
    </source>
</evidence>
<evidence type="ECO:0000256" key="4">
    <source>
        <dbReference type="SAM" id="MobiDB-lite"/>
    </source>
</evidence>
<evidence type="ECO:0000269" key="5">
    <source>
    </source>
</evidence>
<evidence type="ECO:0000269" key="6">
    <source>
    </source>
</evidence>
<evidence type="ECO:0000269" key="7">
    <source>
    </source>
</evidence>
<evidence type="ECO:0000269" key="8">
    <source>
    </source>
</evidence>
<accession>P04290</accession>
<accession>B9VQE0</accession>
<accession>Q09IC0</accession>
<protein>
    <recommendedName>
        <fullName>Serine/threonine-protein kinase UL13</fullName>
        <ecNumber>2.7.11.1</ecNumber>
    </recommendedName>
    <alternativeName>
        <fullName>Virion protein VMW57</fullName>
    </alternativeName>
</protein>
<organismHost>
    <name type="scientific">Homo sapiens</name>
    <name type="common">Human</name>
    <dbReference type="NCBI Taxonomy" id="9606"/>
</organismHost>
<proteinExistence type="evidence at protein level"/>
<keyword id="KW-0067">ATP-binding</keyword>
<keyword id="KW-1048">Host nucleus</keyword>
<keyword id="KW-0945">Host-virus interaction</keyword>
<keyword id="KW-0418">Kinase</keyword>
<keyword id="KW-0547">Nucleotide-binding</keyword>
<keyword id="KW-1185">Reference proteome</keyword>
<keyword id="KW-0723">Serine/threonine-protein kinase</keyword>
<keyword id="KW-0808">Transferase</keyword>
<keyword id="KW-0946">Virion</keyword>
<keyword id="KW-0920">Virion tegument</keyword>
<reference key="1">
    <citation type="journal article" date="1986" name="Nucleic Acids Res.">
        <title>DNA sequence of the region in the genome of herpes simplex virus type 1 containing the exonuclease gene and neighbouring genes.</title>
        <authorList>
            <person name="McGeoch D.J."/>
            <person name="Dolan A."/>
            <person name="Frame M.C."/>
        </authorList>
    </citation>
    <scope>NUCLEOTIDE SEQUENCE [LARGE SCALE GENOMIC DNA]</scope>
</reference>
<reference key="2">
    <citation type="journal article" date="1988" name="J. Gen. Virol.">
        <title>The complete DNA sequence of the long unique region in the genome of herpes simplex virus type 1.</title>
        <authorList>
            <person name="McGeoch D.J."/>
            <person name="Dalrymple M.A."/>
            <person name="Davison A.J."/>
            <person name="Dolan A."/>
            <person name="Frame M.C."/>
            <person name="McNab D."/>
            <person name="Perry L.J."/>
            <person name="Scott J.E."/>
            <person name="Taylor P."/>
        </authorList>
    </citation>
    <scope>NUCLEOTIDE SEQUENCE [GENOMIC DNA]</scope>
</reference>
<reference key="3">
    <citation type="journal article" date="2007" name="Microbes Infect.">
        <title>Determination and analysis of the DNA sequence of highly attenuated herpes simplex virus type 1 mutant HF10, a potential oncolytic virus.</title>
        <authorList>
            <person name="Ushijima Y."/>
            <person name="Luo C."/>
            <person name="Goshima F."/>
            <person name="Yamauchi Y."/>
            <person name="Kimura H."/>
            <person name="Nishiyama Y."/>
        </authorList>
    </citation>
    <scope>NUCLEOTIDE SEQUENCE [LARGE SCALE GENOMIC DNA]</scope>
    <source>
        <strain>Nonneuroinvasive mutant HF10</strain>
    </source>
</reference>
<reference key="4">
    <citation type="submission" date="2008-12" db="EMBL/GenBank/DDBJ databases">
        <title>Herpes simplex virus type 1 bacterial artificial chromosome.</title>
        <authorList>
            <person name="Cunningham C."/>
            <person name="Davison A.J."/>
        </authorList>
    </citation>
    <scope>NUCLEOTIDE SEQUENCE [LARGE SCALE GENOMIC DNA]</scope>
    <source>
        <strain>17 syn+</strain>
    </source>
</reference>
<reference key="5">
    <citation type="journal article" date="1989" name="J. Virol.">
        <title>Identification of new protein kinase-related genes in three herpesviruses, herpes simplex virus, varicella-zoster virus, and Epstein-Barr virus.</title>
        <authorList>
            <person name="Smith R.F."/>
            <person name="Smith T.F."/>
        </authorList>
    </citation>
    <scope>PROBABLE FUNCTION</scope>
</reference>
<reference key="6">
    <citation type="journal article" date="1992" name="J. Gen. Virol.">
        <title>The UL13 virion protein of herpes simplex virus type 1 is phosphorylated by a novel virus-induced protein kinase.</title>
        <authorList>
            <person name="Cunningham C."/>
            <person name="Davison A.J."/>
            <person name="Dolan A."/>
            <person name="Frame M.C."/>
            <person name="McGeoch D.J."/>
            <person name="Meredith D.M."/>
            <person name="Moss H.W."/>
            <person name="Orr A.C."/>
        </authorList>
    </citation>
    <scope>AUTOPHOSPHORYLATION</scope>
</reference>
<reference key="7">
    <citation type="journal article" date="1998" name="Virology">
        <title>UL13 protein kinase of herpes simplex virus 1 complexes with glycoprotein E and mediates the phosphorylation of the viral Fc receptor: glycoproteins E and I.</title>
        <authorList>
            <person name="Ng T.I."/>
            <person name="Ogle W.O."/>
            <person name="Roizman B."/>
        </authorList>
    </citation>
    <scope>FUNCTION IN PHOSPHORYLATION OF GE AND GI</scope>
</reference>
<reference key="8">
    <citation type="journal article" date="2006" name="J. Virol.">
        <title>Herpes simplex virus 1-encoded protein kinase UL13 phosphorylates viral Us3 protein kinase and regulates nuclear localization of viral envelopment factors UL34 and UL31.</title>
        <authorList>
            <person name="Kato A."/>
            <person name="Yamamoto M."/>
            <person name="Ohno T."/>
            <person name="Tanaka M."/>
            <person name="Sata T."/>
            <person name="Nishiyama Y."/>
            <person name="Kawaguchi Y."/>
        </authorList>
    </citation>
    <scope>FUNCTION IN PHOSPHORYLATION OF US3</scope>
    <source>
        <strain>F</strain>
    </source>
</reference>
<reference key="9">
    <citation type="journal article" date="2007" name="Microbes Infect.">
        <title>Identification of proteins directly phosphorylated by UL13 protein kinase from herpes simplex virus 1.</title>
        <authorList>
            <person name="Asai R."/>
            <person name="Ohno T."/>
            <person name="Kato A."/>
            <person name="Kawaguchi Y."/>
        </authorList>
    </citation>
    <scope>FUNCTION</scope>
    <scope>IDENTIFICATION OF SUBSTRATE PROTEINS</scope>
</reference>
<reference key="10">
    <citation type="journal article" date="2008" name="J. Virol.">
        <title>Comprehensive characterization of extracellular herpes simplex virus type 1 virions.</title>
        <authorList>
            <person name="Loret S."/>
            <person name="Guay G."/>
            <person name="Lippe R."/>
        </authorList>
    </citation>
    <scope>SUBCELLULAR LOCATION</scope>
    <source>
        <strain>F</strain>
    </source>
</reference>
<name>UL13_HHV11</name>
<comment type="function">
    <text evidence="5 6 8">Multifunctional serine/threonine kinase that plays a role in several processes including egress of virus particles from the nucleus, modulation of the actin cytoskeleton and regulation of viral and cellular gene expression. Regulates the nuclear localization of viral envelopment factors UL34 and UL31, by phosphorylating the US3 kinase, indicating a role in nuclear egress. Disrupts host nuclear lamins, including LMNA and LMNB1. Phosphorylates the viral Fc receptor composed of glycoproteins E (gE) and I (gI). Phosphorylation of glycoprotein E (gE) by UL13 alters its subcellular localization, from the host early endosome to the plasma membrane. Participates in the transcriptional regulation of cellular and viral mRNAs mainly by phosphorylating the viral transcriptional regulator ICP22. Additional substrates have been identified, including UL41, UL49 or host EF1D.</text>
</comment>
<comment type="catalytic activity">
    <reaction>
        <text>L-seryl-[protein] + ATP = O-phospho-L-seryl-[protein] + ADP + H(+)</text>
        <dbReference type="Rhea" id="RHEA:17989"/>
        <dbReference type="Rhea" id="RHEA-COMP:9863"/>
        <dbReference type="Rhea" id="RHEA-COMP:11604"/>
        <dbReference type="ChEBI" id="CHEBI:15378"/>
        <dbReference type="ChEBI" id="CHEBI:29999"/>
        <dbReference type="ChEBI" id="CHEBI:30616"/>
        <dbReference type="ChEBI" id="CHEBI:83421"/>
        <dbReference type="ChEBI" id="CHEBI:456216"/>
        <dbReference type="EC" id="2.7.11.1"/>
    </reaction>
</comment>
<comment type="catalytic activity">
    <reaction>
        <text>L-threonyl-[protein] + ATP = O-phospho-L-threonyl-[protein] + ADP + H(+)</text>
        <dbReference type="Rhea" id="RHEA:46608"/>
        <dbReference type="Rhea" id="RHEA-COMP:11060"/>
        <dbReference type="Rhea" id="RHEA-COMP:11605"/>
        <dbReference type="ChEBI" id="CHEBI:15378"/>
        <dbReference type="ChEBI" id="CHEBI:30013"/>
        <dbReference type="ChEBI" id="CHEBI:30616"/>
        <dbReference type="ChEBI" id="CHEBI:61977"/>
        <dbReference type="ChEBI" id="CHEBI:456216"/>
        <dbReference type="EC" id="2.7.11.1"/>
    </reaction>
</comment>
<comment type="subcellular location">
    <subcellularLocation>
        <location evidence="7">Virion tegument</location>
    </subcellularLocation>
    <subcellularLocation>
        <location evidence="1">Host nucleus</location>
    </subcellularLocation>
</comment>
<comment type="PTM">
    <text>Autophosphorylated.</text>
</comment>
<comment type="miscellaneous">
    <text>Displays a substrate specificity similar to host CDC2.</text>
</comment>
<comment type="similarity">
    <text evidence="2">Belongs to the protein kinase superfamily. Ser/Thr protein kinase family.</text>
</comment>
<dbReference type="EC" id="2.7.11.1"/>
<dbReference type="EMBL" id="X03839">
    <property type="protein sequence ID" value="CAA27454.1"/>
    <property type="molecule type" value="Genomic_DNA"/>
</dbReference>
<dbReference type="EMBL" id="X14112">
    <property type="protein sequence ID" value="CAA32326.1"/>
    <property type="molecule type" value="Genomic_DNA"/>
</dbReference>
<dbReference type="EMBL" id="DQ889502">
    <property type="protein sequence ID" value="ABI63475.1"/>
    <property type="molecule type" value="Genomic_DNA"/>
</dbReference>
<dbReference type="EMBL" id="FJ593289">
    <property type="protein sequence ID" value="ACM62235.1"/>
    <property type="molecule type" value="Genomic_DNA"/>
</dbReference>
<dbReference type="PIR" id="A03738">
    <property type="entry name" value="WMBE71"/>
</dbReference>
<dbReference type="RefSeq" id="YP_009137087.1">
    <property type="nucleotide sequence ID" value="NC_001806.2"/>
</dbReference>
<dbReference type="BioGRID" id="971421">
    <property type="interactions" value="1"/>
</dbReference>
<dbReference type="IntAct" id="P04290">
    <property type="interactions" value="1"/>
</dbReference>
<dbReference type="MINT" id="P04290"/>
<dbReference type="DNASU" id="2703383"/>
<dbReference type="GeneID" id="2703383"/>
<dbReference type="KEGG" id="vg:2703383"/>
<dbReference type="Proteomes" id="UP000009294">
    <property type="component" value="Segment"/>
</dbReference>
<dbReference type="Proteomes" id="UP000180652">
    <property type="component" value="Segment"/>
</dbReference>
<dbReference type="GO" id="GO:0042025">
    <property type="term" value="C:host cell nucleus"/>
    <property type="evidence" value="ECO:0007669"/>
    <property type="project" value="UniProtKB-SubCell"/>
</dbReference>
<dbReference type="GO" id="GO:0019033">
    <property type="term" value="C:viral tegument"/>
    <property type="evidence" value="ECO:0007669"/>
    <property type="project" value="UniProtKB-SubCell"/>
</dbReference>
<dbReference type="GO" id="GO:0005524">
    <property type="term" value="F:ATP binding"/>
    <property type="evidence" value="ECO:0007669"/>
    <property type="project" value="UniProtKB-KW"/>
</dbReference>
<dbReference type="GO" id="GO:0106310">
    <property type="term" value="F:protein serine kinase activity"/>
    <property type="evidence" value="ECO:0007669"/>
    <property type="project" value="RHEA"/>
</dbReference>
<dbReference type="GO" id="GO:0004674">
    <property type="term" value="F:protein serine/threonine kinase activity"/>
    <property type="evidence" value="ECO:0007669"/>
    <property type="project" value="UniProtKB-KW"/>
</dbReference>
<dbReference type="GO" id="GO:0039580">
    <property type="term" value="P:symbiont-mediated suppression of host PKR/eIFalpha signaling"/>
    <property type="evidence" value="ECO:0000269"/>
    <property type="project" value="SigSci"/>
</dbReference>
<dbReference type="Gene3D" id="1.10.510.10">
    <property type="entry name" value="Transferase(Phosphotransferase) domain 1"/>
    <property type="match status" value="1"/>
</dbReference>
<dbReference type="InterPro" id="IPR011009">
    <property type="entry name" value="Kinase-like_dom_sf"/>
</dbReference>
<dbReference type="InterPro" id="IPR000719">
    <property type="entry name" value="Prot_kinase_dom"/>
</dbReference>
<dbReference type="InterPro" id="IPR008271">
    <property type="entry name" value="Ser/Thr_kinase_AS"/>
</dbReference>
<dbReference type="SMART" id="SM00220">
    <property type="entry name" value="S_TKc"/>
    <property type="match status" value="1"/>
</dbReference>
<dbReference type="SUPFAM" id="SSF56112">
    <property type="entry name" value="Protein kinase-like (PK-like)"/>
    <property type="match status" value="1"/>
</dbReference>
<dbReference type="PROSITE" id="PS50011">
    <property type="entry name" value="PROTEIN_KINASE_DOM"/>
    <property type="match status" value="1"/>
</dbReference>
<dbReference type="PROSITE" id="PS00108">
    <property type="entry name" value="PROTEIN_KINASE_ST"/>
    <property type="match status" value="1"/>
</dbReference>
<sequence length="518" mass="57197">MDESRRQRPAGHVAANLSPQGARQRSFKDWLASYVHSNPHGASGRPSGPSLQDAAVSRSSHGSRHRSGLRERLRAGLSRWRMSRSSHRRASPETPGTAAKLNRPPLRRSQAALTAPPSSPSHILTLTRIRKLCSPVFAINPALHYTTLEIPGARSFGGSGGYGDVQLIREHKLAVKTIKEKEWFAVELIATLLVGECVLRAGRTHNIRGFIAPLGFSLQQRQIVFPAYDMDLGKYIGQLASLRTTNPSVSTALHQCFTELARAVVFLNTTCGISHLDIKCANILVMLRSDAVSLRRAVLADFSLVTLNSNSTIARGQFCLQEPDLKSPRMFGMPTALTTANFHTLVGHGYNQPPELLVKYLNNERAEFTNHRLKHDVGLAVDLYALGQTLLELVVSVYVAPSLGVPVTRFPGYQYFNNQLSPDFALALLAYRCVLHPALFVNSAETNTHGLAYDVPEGIRRHLRNPKIRRAFTDRCINYQHTHKAILSSVALPPELKPLLVLVSRLCHTNPCARHALS</sequence>
<feature type="chain" id="PRO_0000086187" description="Serine/threonine-protein kinase UL13">
    <location>
        <begin position="1"/>
        <end position="518"/>
    </location>
</feature>
<feature type="domain" description="Protein kinase" evidence="2">
    <location>
        <begin position="151"/>
        <end position="518"/>
    </location>
</feature>
<feature type="region of interest" description="Disordered" evidence="4">
    <location>
        <begin position="1"/>
        <end position="119"/>
    </location>
</feature>
<feature type="active site" description="Proton acceptor" evidence="2 3">
    <location>
        <position position="277"/>
    </location>
</feature>
<feature type="binding site" evidence="2">
    <location>
        <begin position="157"/>
        <end position="165"/>
    </location>
    <ligand>
        <name>ATP</name>
        <dbReference type="ChEBI" id="CHEBI:30616"/>
    </ligand>
</feature>
<feature type="binding site" evidence="2">
    <location>
        <position position="176"/>
    </location>
    <ligand>
        <name>ATP</name>
        <dbReference type="ChEBI" id="CHEBI:30616"/>
    </ligand>
</feature>
<feature type="sequence variant" description="In strain: Nonneuroinvasive mutant HF10.">
    <original>V</original>
    <variation>I</variation>
    <location>
        <position position="35"/>
    </location>
</feature>
<feature type="sequence variant" description="In strain: Nonneuroinvasive mutant HF10.">
    <original>D</original>
    <variation>N</variation>
    <location>
        <position position="53"/>
    </location>
</feature>
<feature type="sequence variant" description="In strain: Nonneuroinvasive mutant HF10.">
    <original>S</original>
    <variation>C</variation>
    <location>
        <position position="63"/>
    </location>
</feature>
<feature type="sequence variant" description="In strain: Nonneuroinvasive mutant HF10.">
    <original>T</original>
    <variation>A</variation>
    <location>
        <position position="94"/>
    </location>
</feature>
<feature type="sequence variant" description="In strain: Nonneuroinvasive mutant HF10.">
    <original>D</original>
    <variation>E</variation>
    <location>
        <position position="164"/>
    </location>
</feature>
<feature type="sequence variant" description="In strain: Nonneuroinvasive mutant HF10.">
    <original>V</original>
    <variation>A</variation>
    <location>
        <position position="198"/>
    </location>
</feature>
<feature type="sequence variant" description="In strain: 17 syn+.">
    <original>T</original>
    <variation>I</variation>
    <location>
        <position position="344"/>
    </location>
</feature>
<feature type="sequence variant" description="In strain: Nonneuroinvasive mutant HF10.">
    <original>D</original>
    <variation>E</variation>
    <location>
        <position position="376"/>
    </location>
</feature>
<organism>
    <name type="scientific">Human herpesvirus 1 (strain 17)</name>
    <name type="common">HHV-1</name>
    <name type="synonym">Human herpes simplex virus 1</name>
    <dbReference type="NCBI Taxonomy" id="10299"/>
    <lineage>
        <taxon>Viruses</taxon>
        <taxon>Duplodnaviria</taxon>
        <taxon>Heunggongvirae</taxon>
        <taxon>Peploviricota</taxon>
        <taxon>Herviviricetes</taxon>
        <taxon>Herpesvirales</taxon>
        <taxon>Orthoherpesviridae</taxon>
        <taxon>Alphaherpesvirinae</taxon>
        <taxon>Simplexvirus</taxon>
        <taxon>Simplexvirus humanalpha1</taxon>
        <taxon>Human herpesvirus 1</taxon>
    </lineage>
</organism>
<gene>
    <name type="ORF">UL13</name>
</gene>